<sequence length="289" mass="31548">MKIIVPATSANIGPGFDSVGVAVTKYLQIEVCEERDEWLIEHQIGKWIPHDERNLLLKIALQIVPDLQPRRLKMTSDVPLARGLGSSSSVIVAGIELANQLGQLNLSDHEKLQLATKIEGHPDNVAPAIYGNLVIASSVEGQVSAIVADFPECDFLAYIPNYELRTRDSRSVLPKKLSYKEAVAASSIANVAVAALLAGDMVTAGQAIEGDLFHERYRQDLVREFAMIKQVTKENGAYATYLSGAGPTVMVLASHDKMPTIKAELEKQPFKGKLHDLRVDTQGVRVEAK</sequence>
<accession>C1CL69</accession>
<organism>
    <name type="scientific">Streptococcus pneumoniae (strain P1031)</name>
    <dbReference type="NCBI Taxonomy" id="488223"/>
    <lineage>
        <taxon>Bacteria</taxon>
        <taxon>Bacillati</taxon>
        <taxon>Bacillota</taxon>
        <taxon>Bacilli</taxon>
        <taxon>Lactobacillales</taxon>
        <taxon>Streptococcaceae</taxon>
        <taxon>Streptococcus</taxon>
    </lineage>
</organism>
<name>KHSE_STRZP</name>
<keyword id="KW-0028">Amino-acid biosynthesis</keyword>
<keyword id="KW-0067">ATP-binding</keyword>
<keyword id="KW-0963">Cytoplasm</keyword>
<keyword id="KW-0418">Kinase</keyword>
<keyword id="KW-0547">Nucleotide-binding</keyword>
<keyword id="KW-0791">Threonine biosynthesis</keyword>
<keyword id="KW-0808">Transferase</keyword>
<protein>
    <recommendedName>
        <fullName evidence="1">Homoserine kinase</fullName>
        <shortName evidence="1">HK</shortName>
        <shortName evidence="1">HSK</shortName>
        <ecNumber evidence="1">2.7.1.39</ecNumber>
    </recommendedName>
</protein>
<comment type="function">
    <text evidence="1">Catalyzes the ATP-dependent phosphorylation of L-homoserine to L-homoserine phosphate.</text>
</comment>
<comment type="catalytic activity">
    <reaction evidence="1">
        <text>L-homoserine + ATP = O-phospho-L-homoserine + ADP + H(+)</text>
        <dbReference type="Rhea" id="RHEA:13985"/>
        <dbReference type="ChEBI" id="CHEBI:15378"/>
        <dbReference type="ChEBI" id="CHEBI:30616"/>
        <dbReference type="ChEBI" id="CHEBI:57476"/>
        <dbReference type="ChEBI" id="CHEBI:57590"/>
        <dbReference type="ChEBI" id="CHEBI:456216"/>
        <dbReference type="EC" id="2.7.1.39"/>
    </reaction>
</comment>
<comment type="pathway">
    <text evidence="1">Amino-acid biosynthesis; L-threonine biosynthesis; L-threonine from L-aspartate: step 4/5.</text>
</comment>
<comment type="subcellular location">
    <subcellularLocation>
        <location evidence="1">Cytoplasm</location>
    </subcellularLocation>
</comment>
<comment type="similarity">
    <text evidence="1">Belongs to the GHMP kinase family. Homoserine kinase subfamily.</text>
</comment>
<reference key="1">
    <citation type="journal article" date="2010" name="Genome Biol.">
        <title>Structure and dynamics of the pan-genome of Streptococcus pneumoniae and closely related species.</title>
        <authorList>
            <person name="Donati C."/>
            <person name="Hiller N.L."/>
            <person name="Tettelin H."/>
            <person name="Muzzi A."/>
            <person name="Croucher N.J."/>
            <person name="Angiuoli S.V."/>
            <person name="Oggioni M."/>
            <person name="Dunning Hotopp J.C."/>
            <person name="Hu F.Z."/>
            <person name="Riley D.R."/>
            <person name="Covacci A."/>
            <person name="Mitchell T.J."/>
            <person name="Bentley S.D."/>
            <person name="Kilian M."/>
            <person name="Ehrlich G.D."/>
            <person name="Rappuoli R."/>
            <person name="Moxon E.R."/>
            <person name="Masignani V."/>
        </authorList>
    </citation>
    <scope>NUCLEOTIDE SEQUENCE [LARGE SCALE GENOMIC DNA]</scope>
    <source>
        <strain>P1031</strain>
    </source>
</reference>
<proteinExistence type="inferred from homology"/>
<dbReference type="EC" id="2.7.1.39" evidence="1"/>
<dbReference type="EMBL" id="CP000920">
    <property type="protein sequence ID" value="ACO21187.1"/>
    <property type="molecule type" value="Genomic_DNA"/>
</dbReference>
<dbReference type="RefSeq" id="WP_000692438.1">
    <property type="nucleotide sequence ID" value="NC_012467.1"/>
</dbReference>
<dbReference type="SMR" id="C1CL69"/>
<dbReference type="GeneID" id="45653380"/>
<dbReference type="KEGG" id="spp:SPP_1380"/>
<dbReference type="HOGENOM" id="CLU_041243_0_0_9"/>
<dbReference type="UniPathway" id="UPA00050">
    <property type="reaction ID" value="UER00064"/>
</dbReference>
<dbReference type="GO" id="GO:0005737">
    <property type="term" value="C:cytoplasm"/>
    <property type="evidence" value="ECO:0007669"/>
    <property type="project" value="UniProtKB-SubCell"/>
</dbReference>
<dbReference type="GO" id="GO:0005524">
    <property type="term" value="F:ATP binding"/>
    <property type="evidence" value="ECO:0007669"/>
    <property type="project" value="UniProtKB-UniRule"/>
</dbReference>
<dbReference type="GO" id="GO:0004413">
    <property type="term" value="F:homoserine kinase activity"/>
    <property type="evidence" value="ECO:0007669"/>
    <property type="project" value="UniProtKB-UniRule"/>
</dbReference>
<dbReference type="GO" id="GO:0009088">
    <property type="term" value="P:threonine biosynthetic process"/>
    <property type="evidence" value="ECO:0007669"/>
    <property type="project" value="UniProtKB-UniRule"/>
</dbReference>
<dbReference type="Gene3D" id="3.30.230.10">
    <property type="match status" value="1"/>
</dbReference>
<dbReference type="Gene3D" id="3.30.70.890">
    <property type="entry name" value="GHMP kinase, C-terminal domain"/>
    <property type="match status" value="1"/>
</dbReference>
<dbReference type="HAMAP" id="MF_00384">
    <property type="entry name" value="Homoser_kinase"/>
    <property type="match status" value="1"/>
</dbReference>
<dbReference type="InterPro" id="IPR013750">
    <property type="entry name" value="GHMP_kinase_C_dom"/>
</dbReference>
<dbReference type="InterPro" id="IPR036554">
    <property type="entry name" value="GHMP_kinase_C_sf"/>
</dbReference>
<dbReference type="InterPro" id="IPR006204">
    <property type="entry name" value="GHMP_kinase_N_dom"/>
</dbReference>
<dbReference type="InterPro" id="IPR006203">
    <property type="entry name" value="GHMP_knse_ATP-bd_CS"/>
</dbReference>
<dbReference type="InterPro" id="IPR000870">
    <property type="entry name" value="Homoserine_kinase"/>
</dbReference>
<dbReference type="InterPro" id="IPR020568">
    <property type="entry name" value="Ribosomal_Su5_D2-typ_SF"/>
</dbReference>
<dbReference type="InterPro" id="IPR014721">
    <property type="entry name" value="Ribsml_uS5_D2-typ_fold_subgr"/>
</dbReference>
<dbReference type="NCBIfam" id="TIGR00191">
    <property type="entry name" value="thrB"/>
    <property type="match status" value="1"/>
</dbReference>
<dbReference type="PANTHER" id="PTHR20861:SF1">
    <property type="entry name" value="HOMOSERINE KINASE"/>
    <property type="match status" value="1"/>
</dbReference>
<dbReference type="PANTHER" id="PTHR20861">
    <property type="entry name" value="HOMOSERINE/4-DIPHOSPHOCYTIDYL-2-C-METHYL-D-ERYTHRITOL KINASE"/>
    <property type="match status" value="1"/>
</dbReference>
<dbReference type="Pfam" id="PF08544">
    <property type="entry name" value="GHMP_kinases_C"/>
    <property type="match status" value="1"/>
</dbReference>
<dbReference type="Pfam" id="PF00288">
    <property type="entry name" value="GHMP_kinases_N"/>
    <property type="match status" value="1"/>
</dbReference>
<dbReference type="PIRSF" id="PIRSF000676">
    <property type="entry name" value="Homoser_kin"/>
    <property type="match status" value="1"/>
</dbReference>
<dbReference type="PRINTS" id="PR00958">
    <property type="entry name" value="HOMSERKINASE"/>
</dbReference>
<dbReference type="SUPFAM" id="SSF55060">
    <property type="entry name" value="GHMP Kinase, C-terminal domain"/>
    <property type="match status" value="1"/>
</dbReference>
<dbReference type="SUPFAM" id="SSF54211">
    <property type="entry name" value="Ribosomal protein S5 domain 2-like"/>
    <property type="match status" value="1"/>
</dbReference>
<dbReference type="PROSITE" id="PS00627">
    <property type="entry name" value="GHMP_KINASES_ATP"/>
    <property type="match status" value="1"/>
</dbReference>
<gene>
    <name evidence="1" type="primary">thrB</name>
    <name type="ordered locus">SPP_1380</name>
</gene>
<feature type="chain" id="PRO_1000134266" description="Homoserine kinase">
    <location>
        <begin position="1"/>
        <end position="289"/>
    </location>
</feature>
<feature type="binding site" evidence="1">
    <location>
        <begin position="79"/>
        <end position="89"/>
    </location>
    <ligand>
        <name>ATP</name>
        <dbReference type="ChEBI" id="CHEBI:30616"/>
    </ligand>
</feature>
<evidence type="ECO:0000255" key="1">
    <source>
        <dbReference type="HAMAP-Rule" id="MF_00384"/>
    </source>
</evidence>